<name>TSAC_CHRVO</name>
<keyword id="KW-0067">ATP-binding</keyword>
<keyword id="KW-0963">Cytoplasm</keyword>
<keyword id="KW-0547">Nucleotide-binding</keyword>
<keyword id="KW-0548">Nucleotidyltransferase</keyword>
<keyword id="KW-1185">Reference proteome</keyword>
<keyword id="KW-0808">Transferase</keyword>
<keyword id="KW-0819">tRNA processing</keyword>
<feature type="chain" id="PRO_0000352903" description="Threonylcarbamoyl-AMP synthase">
    <location>
        <begin position="1"/>
        <end position="193"/>
    </location>
</feature>
<feature type="domain" description="YrdC-like" evidence="1">
    <location>
        <begin position="14"/>
        <end position="193"/>
    </location>
</feature>
<evidence type="ECO:0000255" key="1">
    <source>
        <dbReference type="HAMAP-Rule" id="MF_01852"/>
    </source>
</evidence>
<sequence length="193" mass="21207">MKSGSGPLPRLPGSRLQQRARKQLRDGGVIAYSTESCYGLGCRPLDARAIRRVLAIKARPNHKGLIVIAADFEQIRHLVKPLSAAQRAELARYWPGPYTFLLPASRRVPPALRGRHHKIAVRVTAHGEAAALCRRLGTALVSTSANRAGQQSLKTARACRMAFKDKVLTLPGRIGKRRKPSTIIDLESGRVLR</sequence>
<gene>
    <name evidence="1" type="primary">tsaC</name>
    <name type="synonym">rimN</name>
    <name type="ordered locus">CV_0550</name>
</gene>
<reference key="1">
    <citation type="journal article" date="2003" name="Proc. Natl. Acad. Sci. U.S.A.">
        <title>The complete genome sequence of Chromobacterium violaceum reveals remarkable and exploitable bacterial adaptability.</title>
        <authorList>
            <person name="Vasconcelos A.T.R."/>
            <person name="de Almeida D.F."/>
            <person name="Hungria M."/>
            <person name="Guimaraes C.T."/>
            <person name="Antonio R.V."/>
            <person name="Almeida F.C."/>
            <person name="de Almeida L.G.P."/>
            <person name="de Almeida R."/>
            <person name="Alves-Gomes J.A."/>
            <person name="Andrade E.M."/>
            <person name="Araripe J."/>
            <person name="de Araujo M.F.F."/>
            <person name="Astolfi-Filho S."/>
            <person name="Azevedo V."/>
            <person name="Baptista A.J."/>
            <person name="Bataus L.A.M."/>
            <person name="Batista J.S."/>
            <person name="Belo A."/>
            <person name="van den Berg C."/>
            <person name="Bogo M."/>
            <person name="Bonatto S."/>
            <person name="Bordignon J."/>
            <person name="Brigido M.M."/>
            <person name="Brito C.A."/>
            <person name="Brocchi M."/>
            <person name="Burity H.A."/>
            <person name="Camargo A.A."/>
            <person name="Cardoso D.D.P."/>
            <person name="Carneiro N.P."/>
            <person name="Carraro D.M."/>
            <person name="Carvalho C.M.B."/>
            <person name="Cascardo J.C.M."/>
            <person name="Cavada B.S."/>
            <person name="Chueire L.M.O."/>
            <person name="Creczynski-Pasa T.B."/>
            <person name="Cunha-Junior N.C."/>
            <person name="Fagundes N."/>
            <person name="Falcao C.L."/>
            <person name="Fantinatti F."/>
            <person name="Farias I.P."/>
            <person name="Felipe M.S.S."/>
            <person name="Ferrari L.P."/>
            <person name="Ferro J.A."/>
            <person name="Ferro M.I.T."/>
            <person name="Franco G.R."/>
            <person name="Freitas N.S.A."/>
            <person name="Furlan L.R."/>
            <person name="Gazzinelli R.T."/>
            <person name="Gomes E.A."/>
            <person name="Goncalves P.R."/>
            <person name="Grangeiro T.B."/>
            <person name="Grattapaglia D."/>
            <person name="Grisard E.C."/>
            <person name="Hanna E.S."/>
            <person name="Jardim S.N."/>
            <person name="Laurino J."/>
            <person name="Leoi L.C.T."/>
            <person name="Lima L.F.A."/>
            <person name="Loureiro M.F."/>
            <person name="Lyra M.C.C.P."/>
            <person name="Madeira H.M.F."/>
            <person name="Manfio G.P."/>
            <person name="Maranhao A.Q."/>
            <person name="Martins W.S."/>
            <person name="di Mauro S.M.Z."/>
            <person name="de Medeiros S.R.B."/>
            <person name="Meissner R.V."/>
            <person name="Moreira M.A.M."/>
            <person name="Nascimento F.F."/>
            <person name="Nicolas M.F."/>
            <person name="Oliveira J.G."/>
            <person name="Oliveira S.C."/>
            <person name="Paixao R.F.C."/>
            <person name="Parente J.A."/>
            <person name="Pedrosa F.O."/>
            <person name="Pena S.D.J."/>
            <person name="Pereira J.O."/>
            <person name="Pereira M."/>
            <person name="Pinto L.S.R.C."/>
            <person name="Pinto L.S."/>
            <person name="Porto J.I.R."/>
            <person name="Potrich D.P."/>
            <person name="Ramalho-Neto C.E."/>
            <person name="Reis A.M.M."/>
            <person name="Rigo L.U."/>
            <person name="Rondinelli E."/>
            <person name="Santos E.B.P."/>
            <person name="Santos F.R."/>
            <person name="Schneider M.P.C."/>
            <person name="Seuanez H.N."/>
            <person name="Silva A.M.R."/>
            <person name="da Silva A.L.C."/>
            <person name="Silva D.W."/>
            <person name="Silva R."/>
            <person name="Simoes I.C."/>
            <person name="Simon D."/>
            <person name="Soares C.M.A."/>
            <person name="Soares R.B.A."/>
            <person name="Souza E.M."/>
            <person name="Souza K.R.L."/>
            <person name="Souza R.C."/>
            <person name="Steffens M.B.R."/>
            <person name="Steindel M."/>
            <person name="Teixeira S.R."/>
            <person name="Urmenyi T."/>
            <person name="Vettore A."/>
            <person name="Wassem R."/>
            <person name="Zaha A."/>
            <person name="Simpson A.J.G."/>
        </authorList>
    </citation>
    <scope>NUCLEOTIDE SEQUENCE [LARGE SCALE GENOMIC DNA]</scope>
    <source>
        <strain>ATCC 12472 / DSM 30191 / JCM 1249 / CCUG 213 / NBRC 12614 / NCIMB 9131 / NCTC 9757 / MK</strain>
    </source>
</reference>
<dbReference type="EC" id="2.7.7.87" evidence="1"/>
<dbReference type="EMBL" id="AE016825">
    <property type="protein sequence ID" value="AAQ58226.1"/>
    <property type="molecule type" value="Genomic_DNA"/>
</dbReference>
<dbReference type="RefSeq" id="WP_011134105.1">
    <property type="nucleotide sequence ID" value="NC_005085.1"/>
</dbReference>
<dbReference type="SMR" id="Q7P0L7"/>
<dbReference type="STRING" id="243365.CV_0550"/>
<dbReference type="GeneID" id="66365544"/>
<dbReference type="KEGG" id="cvi:CV_0550"/>
<dbReference type="eggNOG" id="COG0009">
    <property type="taxonomic scope" value="Bacteria"/>
</dbReference>
<dbReference type="HOGENOM" id="CLU_031397_6_1_4"/>
<dbReference type="Proteomes" id="UP000001424">
    <property type="component" value="Chromosome"/>
</dbReference>
<dbReference type="GO" id="GO:0005737">
    <property type="term" value="C:cytoplasm"/>
    <property type="evidence" value="ECO:0007669"/>
    <property type="project" value="UniProtKB-SubCell"/>
</dbReference>
<dbReference type="GO" id="GO:0005524">
    <property type="term" value="F:ATP binding"/>
    <property type="evidence" value="ECO:0007669"/>
    <property type="project" value="UniProtKB-UniRule"/>
</dbReference>
<dbReference type="GO" id="GO:0003725">
    <property type="term" value="F:double-stranded RNA binding"/>
    <property type="evidence" value="ECO:0007669"/>
    <property type="project" value="InterPro"/>
</dbReference>
<dbReference type="GO" id="GO:0061710">
    <property type="term" value="F:L-threonylcarbamoyladenylate synthase"/>
    <property type="evidence" value="ECO:0007669"/>
    <property type="project" value="UniProtKB-EC"/>
</dbReference>
<dbReference type="GO" id="GO:0000049">
    <property type="term" value="F:tRNA binding"/>
    <property type="evidence" value="ECO:0007669"/>
    <property type="project" value="TreeGrafter"/>
</dbReference>
<dbReference type="GO" id="GO:0006450">
    <property type="term" value="P:regulation of translational fidelity"/>
    <property type="evidence" value="ECO:0007669"/>
    <property type="project" value="TreeGrafter"/>
</dbReference>
<dbReference type="GO" id="GO:0002949">
    <property type="term" value="P:tRNA threonylcarbamoyladenosine modification"/>
    <property type="evidence" value="ECO:0007669"/>
    <property type="project" value="UniProtKB-UniRule"/>
</dbReference>
<dbReference type="Gene3D" id="3.90.870.10">
    <property type="entry name" value="DHBP synthase"/>
    <property type="match status" value="1"/>
</dbReference>
<dbReference type="HAMAP" id="MF_01852">
    <property type="entry name" value="TsaC"/>
    <property type="match status" value="1"/>
</dbReference>
<dbReference type="InterPro" id="IPR017945">
    <property type="entry name" value="DHBP_synth_RibB-like_a/b_dom"/>
</dbReference>
<dbReference type="InterPro" id="IPR006070">
    <property type="entry name" value="Sua5-like_dom"/>
</dbReference>
<dbReference type="InterPro" id="IPR023535">
    <property type="entry name" value="TC-AMP_synthase"/>
</dbReference>
<dbReference type="InterPro" id="IPR050156">
    <property type="entry name" value="TC-AMP_synthase_SUA5"/>
</dbReference>
<dbReference type="PANTHER" id="PTHR17490">
    <property type="entry name" value="SUA5"/>
    <property type="match status" value="1"/>
</dbReference>
<dbReference type="PANTHER" id="PTHR17490:SF18">
    <property type="entry name" value="THREONYLCARBAMOYL-AMP SYNTHASE"/>
    <property type="match status" value="1"/>
</dbReference>
<dbReference type="Pfam" id="PF01300">
    <property type="entry name" value="Sua5_yciO_yrdC"/>
    <property type="match status" value="1"/>
</dbReference>
<dbReference type="SUPFAM" id="SSF55821">
    <property type="entry name" value="YrdC/RibB"/>
    <property type="match status" value="1"/>
</dbReference>
<dbReference type="PROSITE" id="PS51163">
    <property type="entry name" value="YRDC"/>
    <property type="match status" value="1"/>
</dbReference>
<proteinExistence type="inferred from homology"/>
<organism>
    <name type="scientific">Chromobacterium violaceum (strain ATCC 12472 / DSM 30191 / JCM 1249 / CCUG 213 / NBRC 12614 / NCIMB 9131 / NCTC 9757 / MK)</name>
    <dbReference type="NCBI Taxonomy" id="243365"/>
    <lineage>
        <taxon>Bacteria</taxon>
        <taxon>Pseudomonadati</taxon>
        <taxon>Pseudomonadota</taxon>
        <taxon>Betaproteobacteria</taxon>
        <taxon>Neisseriales</taxon>
        <taxon>Chromobacteriaceae</taxon>
        <taxon>Chromobacterium</taxon>
    </lineage>
</organism>
<protein>
    <recommendedName>
        <fullName evidence="1">Threonylcarbamoyl-AMP synthase</fullName>
        <shortName evidence="1">TC-AMP synthase</shortName>
        <ecNumber evidence="1">2.7.7.87</ecNumber>
    </recommendedName>
    <alternativeName>
        <fullName evidence="1">L-threonylcarbamoyladenylate synthase</fullName>
    </alternativeName>
    <alternativeName>
        <fullName evidence="1">t(6)A37 threonylcarbamoyladenosine biosynthesis protein TsaC</fullName>
    </alternativeName>
    <alternativeName>
        <fullName evidence="1">tRNA threonylcarbamoyladenosine biosynthesis protein TsaC</fullName>
    </alternativeName>
</protein>
<accession>Q7P0L7</accession>
<comment type="function">
    <text evidence="1">Required for the formation of a threonylcarbamoyl group on adenosine at position 37 (t(6)A37) in tRNAs that read codons beginning with adenine. Catalyzes the conversion of L-threonine, HCO(3)(-)/CO(2) and ATP to give threonylcarbamoyl-AMP (TC-AMP) as the acyladenylate intermediate, with the release of diphosphate.</text>
</comment>
<comment type="catalytic activity">
    <reaction evidence="1">
        <text>L-threonine + hydrogencarbonate + ATP = L-threonylcarbamoyladenylate + diphosphate + H2O</text>
        <dbReference type="Rhea" id="RHEA:36407"/>
        <dbReference type="ChEBI" id="CHEBI:15377"/>
        <dbReference type="ChEBI" id="CHEBI:17544"/>
        <dbReference type="ChEBI" id="CHEBI:30616"/>
        <dbReference type="ChEBI" id="CHEBI:33019"/>
        <dbReference type="ChEBI" id="CHEBI:57926"/>
        <dbReference type="ChEBI" id="CHEBI:73682"/>
        <dbReference type="EC" id="2.7.7.87"/>
    </reaction>
</comment>
<comment type="subcellular location">
    <subcellularLocation>
        <location evidence="1">Cytoplasm</location>
    </subcellularLocation>
</comment>
<comment type="similarity">
    <text evidence="1">Belongs to the SUA5 family. TsaC subfamily.</text>
</comment>